<reference evidence="6" key="1">
    <citation type="submission" date="2005-11" db="EMBL/GenBank/DDBJ databases">
        <authorList>
            <consortium name="NIH - Mammalian Gene Collection (MGC) project"/>
        </authorList>
    </citation>
    <scope>NUCLEOTIDE SEQUENCE [LARGE SCALE MRNA]</scope>
    <source>
        <strain evidence="6">Crossbred X Angus</strain>
        <tissue evidence="6">Liver</tissue>
    </source>
</reference>
<reference evidence="5" key="2">
    <citation type="journal article" date="2001" name="J. Biol. Chem.">
        <title>The small subunit of the mammalian mitochondrial ribosome: identification of the full complement of ribosomal proteins present.</title>
        <authorList>
            <person name="Koc E.C."/>
            <person name="Burkhart W."/>
            <person name="Blackburn K."/>
            <person name="Moseley A."/>
            <person name="Spremulli L.L."/>
        </authorList>
    </citation>
    <scope>PROTEIN SEQUENCE OF 36-56 AND 156-173</scope>
    <scope>SUBCELLULAR LOCATION</scope>
    <scope>SUBUNIT</scope>
    <source>
        <tissue evidence="3">Liver</tissue>
    </source>
</reference>
<reference evidence="7" key="3">
    <citation type="journal article" date="2014" name="Proc. Natl. Acad. Sci. U.S.A.">
        <title>Cryo-EM structure of the small subunit of the mammalian mitochondrial ribosome.</title>
        <authorList>
            <person name="Kaushal P.S."/>
            <person name="Sharma M.R."/>
            <person name="Booth T.M."/>
            <person name="Haque E.M."/>
            <person name="Tung C.S."/>
            <person name="Sanbonmatsu K.Y."/>
            <person name="Spremulli L.L."/>
            <person name="Agrawal R.K."/>
        </authorList>
    </citation>
    <scope>STRUCTURE BY ELECTRON MICROSCOPY (7.00 ANGSTROMS)</scope>
    <scope>SUBCELLULAR LOCATION</scope>
    <scope>SUBUNIT</scope>
</reference>
<name>RT18B_BOVIN</name>
<protein>
    <recommendedName>
        <fullName evidence="5">Small ribosomal subunit protein mS40</fullName>
    </recommendedName>
    <alternativeName>
        <fullName>28S ribosomal protein S18-2, mitochondrial</fullName>
        <shortName>MRP-S18-2</shortName>
    </alternativeName>
    <alternativeName>
        <fullName>28S ribosomal protein S18b, mitochondrial</fullName>
        <shortName>MRP-S18-b</shortName>
        <shortName>Mrps18-b</shortName>
        <shortName>S18mt-b</shortName>
    </alternativeName>
</protein>
<accession>P82918</accession>
<accession>Q2TBM4</accession>
<gene>
    <name evidence="1" type="primary">MRPS18B</name>
</gene>
<sequence length="258" mass="29174">MAASVLNVLLRRLPYFSPFRGAYGVQVPLQTLCTKAPPEDDSLPPIPVSPYEDEPWKYLDSEEYHNRNGSRPVWADYRRNHKGGIPPQRTRKMCIRGNKVAGNPCPICRDQKLHVDFRNVKLLKQFVCAHTGIIFHAPYTGVCMKQHKKLTQAIQKARDHGLLSYHIPQVEPRDLDFSTSHGAVSATPPAPTLVSGDPWYPWYSWKQPPERELSRLRRLYQGHLREESGPPPESMPKVPLTAPNEATSTEQAGPQSAL</sequence>
<proteinExistence type="evidence at protein level"/>
<comment type="subunit">
    <text evidence="3 4">Component of the mitochondrial ribosome small subunit (28S) which comprises a 12S rRNA and about 30 distinct proteins.</text>
</comment>
<comment type="subcellular location">
    <subcellularLocation>
        <location evidence="3 4">Mitochondrion</location>
    </subcellularLocation>
</comment>
<comment type="similarity">
    <text evidence="5">Belongs to the bacterial ribosomal protein bS18 family. Mitochondrion-specific ribosomal protein mS40 subfamily.</text>
</comment>
<keyword id="KW-0002">3D-structure</keyword>
<keyword id="KW-0903">Direct protein sequencing</keyword>
<keyword id="KW-0496">Mitochondrion</keyword>
<keyword id="KW-0597">Phosphoprotein</keyword>
<keyword id="KW-1185">Reference proteome</keyword>
<keyword id="KW-0687">Ribonucleoprotein</keyword>
<keyword id="KW-0689">Ribosomal protein</keyword>
<keyword id="KW-0809">Transit peptide</keyword>
<feature type="transit peptide" description="Mitochondrion" evidence="3">
    <location>
        <begin position="1"/>
        <end position="35"/>
    </location>
</feature>
<feature type="chain" id="PRO_0000111316" description="Small ribosomal subunit protein mS40">
    <location>
        <begin position="36"/>
        <end position="258"/>
    </location>
</feature>
<feature type="region of interest" description="Disordered" evidence="2">
    <location>
        <begin position="221"/>
        <end position="258"/>
    </location>
</feature>
<feature type="compositionally biased region" description="Polar residues" evidence="2">
    <location>
        <begin position="244"/>
        <end position="258"/>
    </location>
</feature>
<feature type="modified residue" description="Phosphoserine" evidence="1">
    <location>
        <position position="49"/>
    </location>
</feature>
<feature type="sequence conflict" description="In Ref. 1; AAI09914." evidence="5" ref="1">
    <original>P</original>
    <variation>H</variation>
    <location>
        <position position="47"/>
    </location>
</feature>
<feature type="helix" evidence="8">
    <location>
        <begin position="56"/>
        <end position="60"/>
    </location>
</feature>
<feature type="helix" evidence="8">
    <location>
        <begin position="62"/>
        <end position="67"/>
    </location>
</feature>
<feature type="turn" evidence="8">
    <location>
        <begin position="68"/>
        <end position="70"/>
    </location>
</feature>
<feature type="strand" evidence="8">
    <location>
        <begin position="82"/>
        <end position="85"/>
    </location>
</feature>
<feature type="strand" evidence="8">
    <location>
        <begin position="94"/>
        <end position="98"/>
    </location>
</feature>
<feature type="turn" evidence="8">
    <location>
        <begin position="106"/>
        <end position="109"/>
    </location>
</feature>
<feature type="helix" evidence="8">
    <location>
        <begin position="120"/>
        <end position="123"/>
    </location>
</feature>
<feature type="helix" evidence="8">
    <location>
        <begin position="124"/>
        <end position="126"/>
    </location>
</feature>
<feature type="turn" evidence="8">
    <location>
        <begin position="129"/>
        <end position="131"/>
    </location>
</feature>
<feature type="helix" evidence="8">
    <location>
        <begin position="137"/>
        <end position="140"/>
    </location>
</feature>
<feature type="helix" evidence="8">
    <location>
        <begin position="144"/>
        <end position="160"/>
    </location>
</feature>
<feature type="turn" evidence="8">
    <location>
        <begin position="182"/>
        <end position="184"/>
    </location>
</feature>
<feature type="helix" evidence="8">
    <location>
        <begin position="191"/>
        <end position="195"/>
    </location>
</feature>
<feature type="helix" evidence="8">
    <location>
        <begin position="201"/>
        <end position="203"/>
    </location>
</feature>
<feature type="helix" evidence="8">
    <location>
        <begin position="211"/>
        <end position="219"/>
    </location>
</feature>
<feature type="strand" evidence="8">
    <location>
        <begin position="220"/>
        <end position="223"/>
    </location>
</feature>
<dbReference type="EMBL" id="BC109913">
    <property type="protein sequence ID" value="AAI09914.1"/>
    <property type="molecule type" value="mRNA"/>
</dbReference>
<dbReference type="RefSeq" id="NP_001033613.1">
    <property type="nucleotide sequence ID" value="NM_001038524.1"/>
</dbReference>
<dbReference type="PDB" id="3JD5">
    <property type="method" value="EM"/>
    <property type="resolution" value="7.00 A"/>
    <property type="chains" value="p=1-258"/>
</dbReference>
<dbReference type="PDB" id="6NEQ">
    <property type="method" value="EM"/>
    <property type="resolution" value="3.32 A"/>
    <property type="chains" value="p=1-258"/>
</dbReference>
<dbReference type="PDB" id="6NF8">
    <property type="method" value="EM"/>
    <property type="resolution" value="3.48 A"/>
    <property type="chains" value="p=1-258"/>
</dbReference>
<dbReference type="PDBsum" id="3JD5"/>
<dbReference type="PDBsum" id="6NEQ"/>
<dbReference type="PDBsum" id="6NF8"/>
<dbReference type="EMDB" id="EMD-9358"/>
<dbReference type="EMDB" id="EMD-9362"/>
<dbReference type="SMR" id="P82918"/>
<dbReference type="CORUM" id="P82918"/>
<dbReference type="FunCoup" id="P82918">
    <property type="interactions" value="806"/>
</dbReference>
<dbReference type="IntAct" id="P82918">
    <property type="interactions" value="2"/>
</dbReference>
<dbReference type="STRING" id="9913.ENSBTAP00000009107"/>
<dbReference type="iPTMnet" id="P82918"/>
<dbReference type="PaxDb" id="9913-ENSBTAP00000009107"/>
<dbReference type="GeneID" id="510824"/>
<dbReference type="KEGG" id="bta:510824"/>
<dbReference type="CTD" id="28973"/>
<dbReference type="eggNOG" id="KOG4021">
    <property type="taxonomic scope" value="Eukaryota"/>
</dbReference>
<dbReference type="InParanoid" id="P82918"/>
<dbReference type="OrthoDB" id="2138378at2759"/>
<dbReference type="Proteomes" id="UP000009136">
    <property type="component" value="Unplaced"/>
</dbReference>
<dbReference type="GO" id="GO:0005743">
    <property type="term" value="C:mitochondrial inner membrane"/>
    <property type="evidence" value="ECO:0000304"/>
    <property type="project" value="Reactome"/>
</dbReference>
<dbReference type="GO" id="GO:0005763">
    <property type="term" value="C:mitochondrial small ribosomal subunit"/>
    <property type="evidence" value="ECO:0000314"/>
    <property type="project" value="UniProtKB"/>
</dbReference>
<dbReference type="GO" id="GO:0005739">
    <property type="term" value="C:mitochondrion"/>
    <property type="evidence" value="ECO:0000318"/>
    <property type="project" value="GO_Central"/>
</dbReference>
<dbReference type="GO" id="GO:0003735">
    <property type="term" value="F:structural constituent of ribosome"/>
    <property type="evidence" value="ECO:0007005"/>
    <property type="project" value="UniProtKB"/>
</dbReference>
<dbReference type="GO" id="GO:0032543">
    <property type="term" value="P:mitochondrial translation"/>
    <property type="evidence" value="ECO:0007005"/>
    <property type="project" value="UniProtKB"/>
</dbReference>
<dbReference type="FunFam" id="4.10.640.10:FF:000008">
    <property type="entry name" value="28S ribosomal protein S18b, mitochondrial"/>
    <property type="match status" value="1"/>
</dbReference>
<dbReference type="Gene3D" id="4.10.640.10">
    <property type="entry name" value="Ribosomal protein S18"/>
    <property type="match status" value="1"/>
</dbReference>
<dbReference type="InterPro" id="IPR040054">
    <property type="entry name" value="MRPS18B"/>
</dbReference>
<dbReference type="InterPro" id="IPR001648">
    <property type="entry name" value="Ribosomal_bS18"/>
</dbReference>
<dbReference type="InterPro" id="IPR036870">
    <property type="entry name" value="Ribosomal_bS18_sf"/>
</dbReference>
<dbReference type="PANTHER" id="PTHR13329">
    <property type="entry name" value="MITOCHONDRIAL RIBOSOMAL PROTEIN S18B"/>
    <property type="match status" value="1"/>
</dbReference>
<dbReference type="PANTHER" id="PTHR13329:SF2">
    <property type="entry name" value="SMALL RIBOSOMAL SUBUNIT PROTEIN MS40"/>
    <property type="match status" value="1"/>
</dbReference>
<dbReference type="Pfam" id="PF01084">
    <property type="entry name" value="Ribosomal_S18"/>
    <property type="match status" value="1"/>
</dbReference>
<dbReference type="SUPFAM" id="SSF46911">
    <property type="entry name" value="Ribosomal protein S18"/>
    <property type="match status" value="1"/>
</dbReference>
<organism>
    <name type="scientific">Bos taurus</name>
    <name type="common">Bovine</name>
    <dbReference type="NCBI Taxonomy" id="9913"/>
    <lineage>
        <taxon>Eukaryota</taxon>
        <taxon>Metazoa</taxon>
        <taxon>Chordata</taxon>
        <taxon>Craniata</taxon>
        <taxon>Vertebrata</taxon>
        <taxon>Euteleostomi</taxon>
        <taxon>Mammalia</taxon>
        <taxon>Eutheria</taxon>
        <taxon>Laurasiatheria</taxon>
        <taxon>Artiodactyla</taxon>
        <taxon>Ruminantia</taxon>
        <taxon>Pecora</taxon>
        <taxon>Bovidae</taxon>
        <taxon>Bovinae</taxon>
        <taxon>Bos</taxon>
    </lineage>
</organism>
<evidence type="ECO:0000250" key="1">
    <source>
        <dbReference type="UniProtKB" id="Q9Y676"/>
    </source>
</evidence>
<evidence type="ECO:0000256" key="2">
    <source>
        <dbReference type="SAM" id="MobiDB-lite"/>
    </source>
</evidence>
<evidence type="ECO:0000269" key="3">
    <source>
    </source>
</evidence>
<evidence type="ECO:0000269" key="4">
    <source>
    </source>
</evidence>
<evidence type="ECO:0000305" key="5"/>
<evidence type="ECO:0000312" key="6">
    <source>
        <dbReference type="EMBL" id="AAI09914.1"/>
    </source>
</evidence>
<evidence type="ECO:0007744" key="7">
    <source>
        <dbReference type="PDB" id="3JD5"/>
    </source>
</evidence>
<evidence type="ECO:0007829" key="8">
    <source>
        <dbReference type="PDB" id="6NEQ"/>
    </source>
</evidence>